<gene>
    <name type="primary">Segment-6</name>
    <name type="synonym">S5</name>
</gene>
<organism>
    <name type="scientific">Bluetongue virus 1 (isolate South Africa)</name>
    <name type="common">BTV 1</name>
    <dbReference type="NCBI Taxonomy" id="10905"/>
    <lineage>
        <taxon>Viruses</taxon>
        <taxon>Riboviria</taxon>
        <taxon>Orthornavirae</taxon>
        <taxon>Duplornaviricota</taxon>
        <taxon>Resentoviricetes</taxon>
        <taxon>Reovirales</taxon>
        <taxon>Sedoreoviridae</taxon>
        <taxon>Orbivirus</taxon>
        <taxon>Bluetongue virus</taxon>
    </lineage>
</organism>
<reference key="1">
    <citation type="journal article" date="1988" name="Virus Res.">
        <title>Sequence analysis and in vitro expression of a cDNA clone of genome segment 5 from bluetongue virus, serotype 1 from South Africa.</title>
        <authorList>
            <person name="Wade-Evans A.M."/>
            <person name="Pan Z.Q."/>
            <person name="Mertens P.P.C."/>
        </authorList>
    </citation>
    <scope>NUCLEOTIDE SEQUENCE [GENOMIC RNA]</scope>
</reference>
<organismHost>
    <name type="scientific">Antilocapra americana</name>
    <name type="common">Pronghorn</name>
    <dbReference type="NCBI Taxonomy" id="9891"/>
</organismHost>
<organismHost>
    <name type="scientific">Bos taurus</name>
    <name type="common">Bovine</name>
    <dbReference type="NCBI Taxonomy" id="9913"/>
</organismHost>
<organismHost>
    <name type="scientific">Capra hircus</name>
    <name type="common">Goat</name>
    <dbReference type="NCBI Taxonomy" id="9925"/>
</organismHost>
<organismHost>
    <name type="scientific">Culicoides variipennis</name>
    <name type="common">Biting midge</name>
    <dbReference type="NCBI Taxonomy" id="46212"/>
</organismHost>
<organismHost>
    <name type="scientific">Ovis aries</name>
    <name type="common">Sheep</name>
    <dbReference type="NCBI Taxonomy" id="9940"/>
</organismHost>
<comment type="function">
    <text evidence="1">VP5 protein is one of the two proteins (with VP2) which constitute the virus particle outer capsid. Acts as a membrane permeabilization protein that mediates release of viral particles from endosomal compartments into the cytoplasm. Permeabilization activity is probably negatively regulated by VP2 and is triggered by endosomal degradation of VP2 and exposure to low pH (By similarity).</text>
</comment>
<comment type="subcellular location">
    <subcellularLocation>
        <location evidence="2">Virion</location>
    </subcellularLocation>
</comment>
<comment type="similarity">
    <text evidence="2">Belongs to the orbivirus VP5 family.</text>
</comment>
<protein>
    <recommendedName>
        <fullName>Outer capsid protein VP5</fullName>
    </recommendedName>
</protein>
<sequence>MGKVIRSLNRFGKKVGNALTSNTAKKIYSTIGKAADEFLESEIGSAAIDGLVQGSVHSIITGESYGESVKQAVLLNVLGSGEEIPDPLSPGERGIQAKLKELEDEQRNELVRLKYNDKIKEKFEKELEEVYNFYNGEANAEIEDEKQFDILNKAVTSYNKILTEEDLQNRRLATRLQKEIGERTHAETVMVKEYRDKIDALKNAIEVERDGMQEEAIQEIAGMTADVLEAASEEVPLIGAGMATAVATGRAIEGAYKLKKVINALSGIDLTHFTHYENRPSVVSTILEYRAKEIPDNALAVSVLIKERAIQENHKELMHIKNEILPRFKKAMDEEKEIMRDRRQMIHPKVMMKFKIPRAQQPQIHVYSAPWDSDDVFFFHCISHHHANDSFFLGFDLSIDLVHYEDLTAHAHAIGAAQTAAGRTLTEAYREFLNLAISKAFGTQMHTRRLVRSKTVHPIYLGSLHYDISFSDLRGNAQRIVYDDELQMHILRGPIHFQRRAILGALKFGCKVLGDRLDVPLFLRNA</sequence>
<feature type="chain" id="PRO_0000222710" description="Outer capsid protein VP5">
    <location>
        <begin position="1"/>
        <end position="526"/>
    </location>
</feature>
<feature type="region of interest" description="Involved in membrane permeabilization" evidence="1">
    <location>
        <begin position="1"/>
        <end position="42"/>
    </location>
</feature>
<dbReference type="EMBL" id="M36713">
    <property type="protein sequence ID" value="AAA42848.1"/>
    <property type="molecule type" value="Genomic_RNA"/>
</dbReference>
<dbReference type="PIR" id="A45185">
    <property type="entry name" value="A45185"/>
</dbReference>
<dbReference type="SMR" id="P33475"/>
<dbReference type="DIP" id="DIP-59520N"/>
<dbReference type="IntAct" id="P33475">
    <property type="interactions" value="1"/>
</dbReference>
<dbReference type="GO" id="GO:0039624">
    <property type="term" value="C:viral outer capsid"/>
    <property type="evidence" value="ECO:0007669"/>
    <property type="project" value="UniProtKB-KW"/>
</dbReference>
<dbReference type="GO" id="GO:0005198">
    <property type="term" value="F:structural molecule activity"/>
    <property type="evidence" value="ECO:0007669"/>
    <property type="project" value="InterPro"/>
</dbReference>
<dbReference type="GO" id="GO:0140267">
    <property type="term" value="P:symbiont entry into host cell via permeabilization of host membrane"/>
    <property type="evidence" value="ECO:0007669"/>
    <property type="project" value="UniProtKB-KW"/>
</dbReference>
<dbReference type="InterPro" id="IPR000145">
    <property type="entry name" value="Capsid_VP5_Orbivir"/>
</dbReference>
<dbReference type="Pfam" id="PF00901">
    <property type="entry name" value="Orbi_VP5"/>
    <property type="match status" value="1"/>
</dbReference>
<accession>P33475</accession>
<keyword id="KW-0167">Capsid protein</keyword>
<keyword id="KW-1152">Outer capsid protein</keyword>
<keyword id="KW-1162">Viral penetration into host cytoplasm</keyword>
<keyword id="KW-1173">Viral penetration via permeabilization of host membrane</keyword>
<keyword id="KW-0946">Virion</keyword>
<keyword id="KW-1160">Virus entry into host cell</keyword>
<name>VP5_BTV1S</name>
<evidence type="ECO:0000250" key="1"/>
<evidence type="ECO:0000305" key="2"/>
<proteinExistence type="inferred from homology"/>